<comment type="function">
    <text evidence="2">Member of the two-component regulatory system HptS/HptR that regulates genes involved in hexose phosphate transport system in response to changes in extracellular phosphate sources. May act as a sensor protein kinase which is autophosphorylated at a histidine residue and transfers its phosphate group to the conserved aspartic acid residue in the regulatory domain of HptS. In turn, HptS antagonizes CcpA-dependent transcription of a subset of CcpA-regulated genes involved in antibiotic susceptibility.</text>
</comment>
<comment type="catalytic activity">
    <reaction>
        <text>ATP + protein L-histidine = ADP + protein N-phospho-L-histidine.</text>
        <dbReference type="EC" id="2.7.13.3"/>
    </reaction>
</comment>
<comment type="subcellular location">
    <subcellularLocation>
        <location evidence="4">Cell membrane</location>
        <topology evidence="4">Multi-pass membrane protein</topology>
    </subcellularLocation>
</comment>
<comment type="PTM">
    <text evidence="1">Autophosphorylated.</text>
</comment>
<evidence type="ECO:0000250" key="1"/>
<evidence type="ECO:0000250" key="2">
    <source>
        <dbReference type="UniProtKB" id="Q2G1E0"/>
    </source>
</evidence>
<evidence type="ECO:0000255" key="3"/>
<evidence type="ECO:0000305" key="4"/>
<name>HPTS_STAAB</name>
<accession>Q2YV55</accession>
<organism>
    <name type="scientific">Staphylococcus aureus (strain bovine RF122 / ET3-1)</name>
    <dbReference type="NCBI Taxonomy" id="273036"/>
    <lineage>
        <taxon>Bacteria</taxon>
        <taxon>Bacillati</taxon>
        <taxon>Bacillota</taxon>
        <taxon>Bacilli</taxon>
        <taxon>Bacillales</taxon>
        <taxon>Staphylococcaceae</taxon>
        <taxon>Staphylococcus</taxon>
    </lineage>
</organism>
<protein>
    <recommendedName>
        <fullName>Sensor protein kinase HptS</fullName>
        <ecNumber>2.7.13.3</ecNumber>
    </recommendedName>
</protein>
<reference key="1">
    <citation type="journal article" date="2007" name="PLoS ONE">
        <title>Molecular correlates of host specialization in Staphylococcus aureus.</title>
        <authorList>
            <person name="Herron-Olson L."/>
            <person name="Fitzgerald J.R."/>
            <person name="Musser J.M."/>
            <person name="Kapur V."/>
        </authorList>
    </citation>
    <scope>NUCLEOTIDE SEQUENCE [LARGE SCALE GENOMIC DNA]</scope>
    <source>
        <strain>bovine RF122 / ET3-1</strain>
    </source>
</reference>
<dbReference type="EC" id="2.7.13.3"/>
<dbReference type="EMBL" id="AJ938182">
    <property type="protein sequence ID" value="CAI79850.1"/>
    <property type="molecule type" value="Genomic_DNA"/>
</dbReference>
<dbReference type="RefSeq" id="WP_000127999.1">
    <property type="nucleotide sequence ID" value="NC_007622.1"/>
</dbReference>
<dbReference type="SMR" id="Q2YV55"/>
<dbReference type="KEGG" id="sab:SAB0162c"/>
<dbReference type="HOGENOM" id="CLU_525720_0_0_9"/>
<dbReference type="GO" id="GO:0005886">
    <property type="term" value="C:plasma membrane"/>
    <property type="evidence" value="ECO:0007669"/>
    <property type="project" value="UniProtKB-SubCell"/>
</dbReference>
<dbReference type="GO" id="GO:0005524">
    <property type="term" value="F:ATP binding"/>
    <property type="evidence" value="ECO:0007669"/>
    <property type="project" value="UniProtKB-KW"/>
</dbReference>
<dbReference type="GO" id="GO:0000155">
    <property type="term" value="F:phosphorelay sensor kinase activity"/>
    <property type="evidence" value="ECO:0007669"/>
    <property type="project" value="InterPro"/>
</dbReference>
<dbReference type="Gene3D" id="3.30.565.10">
    <property type="entry name" value="Histidine kinase-like ATPase, C-terminal domain"/>
    <property type="match status" value="1"/>
</dbReference>
<dbReference type="InterPro" id="IPR050640">
    <property type="entry name" value="Bact_2-comp_sensor_kinase"/>
</dbReference>
<dbReference type="InterPro" id="IPR036890">
    <property type="entry name" value="HATPase_C_sf"/>
</dbReference>
<dbReference type="InterPro" id="IPR010559">
    <property type="entry name" value="Sig_transdc_His_kin_internal"/>
</dbReference>
<dbReference type="PANTHER" id="PTHR34220">
    <property type="entry name" value="SENSOR HISTIDINE KINASE YPDA"/>
    <property type="match status" value="1"/>
</dbReference>
<dbReference type="PANTHER" id="PTHR34220:SF11">
    <property type="entry name" value="SENSOR PROTEIN KINASE HPTS"/>
    <property type="match status" value="1"/>
</dbReference>
<dbReference type="Pfam" id="PF02518">
    <property type="entry name" value="HATPase_c"/>
    <property type="match status" value="1"/>
</dbReference>
<dbReference type="Pfam" id="PF06580">
    <property type="entry name" value="His_kinase"/>
    <property type="match status" value="1"/>
</dbReference>
<dbReference type="SUPFAM" id="SSF55874">
    <property type="entry name" value="ATPase domain of HSP90 chaperone/DNA topoisomerase II/histidine kinase"/>
    <property type="match status" value="1"/>
</dbReference>
<gene>
    <name type="primary">hptS</name>
    <name type="ordered locus">SAB0162c</name>
</gene>
<proteinExistence type="inferred from homology"/>
<sequence>MTAYKPYRHQLRRSLFASTIFPVFLVIIIGLVSFYAIYIWIEHRTIHQHVNESQSSLHHIEKQIQTFITQHNNSFQELDLTNHHDVTATKRELLKLIHQQPATLYYELSGPNQFITNNYEHLNTKNMYLFSTHQLKFKNSTYMLKIYMANTPRLSEIKKDSRQFALIVDRYDNILYANDDRFTIGEKYRPQQFGFMNESVKLNHANHRLIIYKDIHENIEDGITLLIVMAVVLVLLVIFGFISADNMAKRQTKDIETIIQKIYYAKNRHLGTYTPLKNNSELEEINNYIYDLFESNEQLIHSIEHTERRLRDIQLKEIERQFQPHFLFNTMQTIQYLITLSPKLAQTVVQQLSQMLRYSLRTNSHTVELNEELNYIEQYVAIQNIRFDDMIKLHIESSEEARHQTIGKMMLQPLIENAIKHGRDTESLDITIRLTLARQNLHVLVCDNGIGMSSSRLQYVRQSLNNDVFDTKHLGLNHLHNKAMIQYGSHARLHIFSKRNLGTLICYKIPLSRGNVDV</sequence>
<keyword id="KW-0067">ATP-binding</keyword>
<keyword id="KW-1003">Cell membrane</keyword>
<keyword id="KW-0418">Kinase</keyword>
<keyword id="KW-0472">Membrane</keyword>
<keyword id="KW-0547">Nucleotide-binding</keyword>
<keyword id="KW-0597">Phosphoprotein</keyword>
<keyword id="KW-0808">Transferase</keyword>
<keyword id="KW-0812">Transmembrane</keyword>
<keyword id="KW-1133">Transmembrane helix</keyword>
<keyword id="KW-0902">Two-component regulatory system</keyword>
<feature type="chain" id="PRO_0000299119" description="Sensor protein kinase HptS">
    <location>
        <begin position="1"/>
        <end position="518"/>
    </location>
</feature>
<feature type="transmembrane region" description="Helical" evidence="3">
    <location>
        <begin position="20"/>
        <end position="40"/>
    </location>
</feature>
<feature type="transmembrane region" description="Helical" evidence="3">
    <location>
        <begin position="222"/>
        <end position="242"/>
    </location>
</feature>
<feature type="domain" description="Histidine kinase">
    <location>
        <begin position="297"/>
        <end position="513"/>
    </location>
</feature>
<feature type="modified residue" description="Phosphohistidine; by autocatalysis" evidence="1">
    <location>
        <position position="325"/>
    </location>
</feature>